<dbReference type="EMBL" id="AE009948">
    <property type="protein sequence ID" value="AAM98909.1"/>
    <property type="molecule type" value="Genomic_DNA"/>
</dbReference>
<dbReference type="RefSeq" id="NP_687037.1">
    <property type="nucleotide sequence ID" value="NC_004116.1"/>
</dbReference>
<dbReference type="RefSeq" id="WP_000138202.1">
    <property type="nucleotide sequence ID" value="NC_004116.1"/>
</dbReference>
<dbReference type="SMR" id="Q8E2I7"/>
<dbReference type="STRING" id="208435.SAG0001"/>
<dbReference type="GeneID" id="66884915"/>
<dbReference type="KEGG" id="sag:SAG0001"/>
<dbReference type="PATRIC" id="fig|208435.3.peg.1"/>
<dbReference type="HOGENOM" id="CLU_026910_3_1_9"/>
<dbReference type="OrthoDB" id="9807019at2"/>
<dbReference type="Proteomes" id="UP000000821">
    <property type="component" value="Chromosome"/>
</dbReference>
<dbReference type="GO" id="GO:0005737">
    <property type="term" value="C:cytoplasm"/>
    <property type="evidence" value="ECO:0007669"/>
    <property type="project" value="UniProtKB-SubCell"/>
</dbReference>
<dbReference type="GO" id="GO:0005886">
    <property type="term" value="C:plasma membrane"/>
    <property type="evidence" value="ECO:0007669"/>
    <property type="project" value="TreeGrafter"/>
</dbReference>
<dbReference type="GO" id="GO:0005524">
    <property type="term" value="F:ATP binding"/>
    <property type="evidence" value="ECO:0007669"/>
    <property type="project" value="UniProtKB-UniRule"/>
</dbReference>
<dbReference type="GO" id="GO:0016887">
    <property type="term" value="F:ATP hydrolysis activity"/>
    <property type="evidence" value="ECO:0007669"/>
    <property type="project" value="InterPro"/>
</dbReference>
<dbReference type="GO" id="GO:0003688">
    <property type="term" value="F:DNA replication origin binding"/>
    <property type="evidence" value="ECO:0007669"/>
    <property type="project" value="UniProtKB-UniRule"/>
</dbReference>
<dbReference type="GO" id="GO:0008289">
    <property type="term" value="F:lipid binding"/>
    <property type="evidence" value="ECO:0007669"/>
    <property type="project" value="UniProtKB-KW"/>
</dbReference>
<dbReference type="GO" id="GO:0006270">
    <property type="term" value="P:DNA replication initiation"/>
    <property type="evidence" value="ECO:0007669"/>
    <property type="project" value="UniProtKB-UniRule"/>
</dbReference>
<dbReference type="GO" id="GO:0006275">
    <property type="term" value="P:regulation of DNA replication"/>
    <property type="evidence" value="ECO:0007669"/>
    <property type="project" value="UniProtKB-UniRule"/>
</dbReference>
<dbReference type="CDD" id="cd00009">
    <property type="entry name" value="AAA"/>
    <property type="match status" value="1"/>
</dbReference>
<dbReference type="CDD" id="cd06571">
    <property type="entry name" value="Bac_DnaA_C"/>
    <property type="match status" value="1"/>
</dbReference>
<dbReference type="FunFam" id="1.10.1750.10:FF:000002">
    <property type="entry name" value="Chromosomal replication initiator protein DnaA"/>
    <property type="match status" value="1"/>
</dbReference>
<dbReference type="FunFam" id="3.40.50.300:FF:000668">
    <property type="entry name" value="Chromosomal replication initiator protein DnaA"/>
    <property type="match status" value="1"/>
</dbReference>
<dbReference type="Gene3D" id="1.10.1750.10">
    <property type="match status" value="1"/>
</dbReference>
<dbReference type="Gene3D" id="1.10.8.60">
    <property type="match status" value="1"/>
</dbReference>
<dbReference type="Gene3D" id="3.40.50.300">
    <property type="entry name" value="P-loop containing nucleotide triphosphate hydrolases"/>
    <property type="match status" value="1"/>
</dbReference>
<dbReference type="HAMAP" id="MF_00377">
    <property type="entry name" value="DnaA_bact"/>
    <property type="match status" value="1"/>
</dbReference>
<dbReference type="InterPro" id="IPR003593">
    <property type="entry name" value="AAA+_ATPase"/>
</dbReference>
<dbReference type="InterPro" id="IPR001957">
    <property type="entry name" value="Chromosome_initiator_DnaA"/>
</dbReference>
<dbReference type="InterPro" id="IPR020591">
    <property type="entry name" value="Chromosome_initiator_DnaA-like"/>
</dbReference>
<dbReference type="InterPro" id="IPR018312">
    <property type="entry name" value="Chromosome_initiator_DnaA_CS"/>
</dbReference>
<dbReference type="InterPro" id="IPR013159">
    <property type="entry name" value="DnaA_C"/>
</dbReference>
<dbReference type="InterPro" id="IPR013317">
    <property type="entry name" value="DnaA_dom"/>
</dbReference>
<dbReference type="InterPro" id="IPR027417">
    <property type="entry name" value="P-loop_NTPase"/>
</dbReference>
<dbReference type="InterPro" id="IPR010921">
    <property type="entry name" value="Trp_repressor/repl_initiator"/>
</dbReference>
<dbReference type="NCBIfam" id="TIGR00362">
    <property type="entry name" value="DnaA"/>
    <property type="match status" value="1"/>
</dbReference>
<dbReference type="PANTHER" id="PTHR30050">
    <property type="entry name" value="CHROMOSOMAL REPLICATION INITIATOR PROTEIN DNAA"/>
    <property type="match status" value="1"/>
</dbReference>
<dbReference type="PANTHER" id="PTHR30050:SF2">
    <property type="entry name" value="CHROMOSOMAL REPLICATION INITIATOR PROTEIN DNAA"/>
    <property type="match status" value="1"/>
</dbReference>
<dbReference type="Pfam" id="PF00308">
    <property type="entry name" value="Bac_DnaA"/>
    <property type="match status" value="1"/>
</dbReference>
<dbReference type="Pfam" id="PF08299">
    <property type="entry name" value="Bac_DnaA_C"/>
    <property type="match status" value="1"/>
</dbReference>
<dbReference type="PRINTS" id="PR00051">
    <property type="entry name" value="DNAA"/>
</dbReference>
<dbReference type="SMART" id="SM00382">
    <property type="entry name" value="AAA"/>
    <property type="match status" value="1"/>
</dbReference>
<dbReference type="SMART" id="SM00760">
    <property type="entry name" value="Bac_DnaA_C"/>
    <property type="match status" value="1"/>
</dbReference>
<dbReference type="SUPFAM" id="SSF52540">
    <property type="entry name" value="P-loop containing nucleoside triphosphate hydrolases"/>
    <property type="match status" value="1"/>
</dbReference>
<dbReference type="SUPFAM" id="SSF48295">
    <property type="entry name" value="TrpR-like"/>
    <property type="match status" value="1"/>
</dbReference>
<dbReference type="PROSITE" id="PS01008">
    <property type="entry name" value="DNAA"/>
    <property type="match status" value="1"/>
</dbReference>
<name>DNAA_STRA5</name>
<organism>
    <name type="scientific">Streptococcus agalactiae serotype V (strain ATCC BAA-611 / 2603 V/R)</name>
    <dbReference type="NCBI Taxonomy" id="208435"/>
    <lineage>
        <taxon>Bacteria</taxon>
        <taxon>Bacillati</taxon>
        <taxon>Bacillota</taxon>
        <taxon>Bacilli</taxon>
        <taxon>Lactobacillales</taxon>
        <taxon>Streptococcaceae</taxon>
        <taxon>Streptococcus</taxon>
    </lineage>
</organism>
<proteinExistence type="inferred from homology"/>
<evidence type="ECO:0000255" key="1">
    <source>
        <dbReference type="HAMAP-Rule" id="MF_00377"/>
    </source>
</evidence>
<reference key="1">
    <citation type="journal article" date="2002" name="Proc. Natl. Acad. Sci. U.S.A.">
        <title>Complete genome sequence and comparative genomic analysis of an emerging human pathogen, serotype V Streptococcus agalactiae.</title>
        <authorList>
            <person name="Tettelin H."/>
            <person name="Masignani V."/>
            <person name="Cieslewicz M.J."/>
            <person name="Eisen J.A."/>
            <person name="Peterson S.N."/>
            <person name="Wessels M.R."/>
            <person name="Paulsen I.T."/>
            <person name="Nelson K.E."/>
            <person name="Margarit I."/>
            <person name="Read T.D."/>
            <person name="Madoff L.C."/>
            <person name="Wolf A.M."/>
            <person name="Beanan M.J."/>
            <person name="Brinkac L.M."/>
            <person name="Daugherty S.C."/>
            <person name="DeBoy R.T."/>
            <person name="Durkin A.S."/>
            <person name="Kolonay J.F."/>
            <person name="Madupu R."/>
            <person name="Lewis M.R."/>
            <person name="Radune D."/>
            <person name="Fedorova N.B."/>
            <person name="Scanlan D."/>
            <person name="Khouri H.M."/>
            <person name="Mulligan S."/>
            <person name="Carty H.A."/>
            <person name="Cline R.T."/>
            <person name="Van Aken S.E."/>
            <person name="Gill J."/>
            <person name="Scarselli M."/>
            <person name="Mora M."/>
            <person name="Iacobini E.T."/>
            <person name="Brettoni C."/>
            <person name="Galli G."/>
            <person name="Mariani M."/>
            <person name="Vegni F."/>
            <person name="Maione D."/>
            <person name="Rinaudo D."/>
            <person name="Rappuoli R."/>
            <person name="Telford J.L."/>
            <person name="Kasper D.L."/>
            <person name="Grandi G."/>
            <person name="Fraser C.M."/>
        </authorList>
    </citation>
    <scope>NUCLEOTIDE SEQUENCE [LARGE SCALE GENOMIC DNA]</scope>
    <source>
        <strain>ATCC BAA-611 / 2603 V/R</strain>
    </source>
</reference>
<accession>Q8E2I7</accession>
<keyword id="KW-0067">ATP-binding</keyword>
<keyword id="KW-0963">Cytoplasm</keyword>
<keyword id="KW-0235">DNA replication</keyword>
<keyword id="KW-0238">DNA-binding</keyword>
<keyword id="KW-0446">Lipid-binding</keyword>
<keyword id="KW-0547">Nucleotide-binding</keyword>
<keyword id="KW-1185">Reference proteome</keyword>
<comment type="function">
    <text evidence="1">Plays an essential role in the initiation and regulation of chromosomal replication. ATP-DnaA binds to the origin of replication (oriC) to initiate formation of the DNA replication initiation complex once per cell cycle. Binds the DnaA box (a 9 base pair repeat at the origin) and separates the double-stranded (ds)DNA. Forms a right-handed helical filament on oriC DNA; dsDNA binds to the exterior of the filament while single-stranded (ss)DNA is stabiized in the filament's interior. The ATP-DnaA-oriC complex binds and stabilizes one strand of the AT-rich DNA unwinding element (DUE), permitting loading of DNA polymerase. After initiation quickly degrades to an ADP-DnaA complex that is not apt for DNA replication. Binds acidic phospholipids.</text>
</comment>
<comment type="subunit">
    <text evidence="1">Oligomerizes as a right-handed, spiral filament on DNA at oriC.</text>
</comment>
<comment type="subcellular location">
    <subcellularLocation>
        <location evidence="1">Cytoplasm</location>
    </subcellularLocation>
</comment>
<comment type="domain">
    <text evidence="1">Domain I is involved in oligomerization and binding regulators, domain II is flexibile and of varying length in different bacteria, domain III forms the AAA+ region, while domain IV binds dsDNA.</text>
</comment>
<comment type="similarity">
    <text evidence="1">Belongs to the DnaA family.</text>
</comment>
<sequence>MTENEQLFWNRVLELSRSQIAPAAYEFFVLEARLLKIEHQTAVITLDNIEMKKLFWEQNLGPVILTAGFEIFNAEITANYVSNDLHLQETSFSNYQQSSNEVNTLPIRKIDSNLKEKYTFANFVQGDENRWAVSASIAVADSPGTTYNPLFIWGGPGLGKTHLLNAIGNQVLRDNPNARVLYITAENFINEFVSHIRLDSMEELKEKFRNLDLLLIDDIQSLAKKTLGGTQEEFFNTFNALHTNDKQIVLTSDRNPNQLNDLEERLVTRFSWGLPVNITPPDFETRVAILTNKIQEYPYDFPQDTIEYLAGEFDSNVRELEGALKNISLVADFKHAKTITVDIAAEAIRARKNDGPIVTVIPIEEIQIQVGKFYGVTVKEIKATKRTQDIVLARQVAMYLAREMTDNSLPKIGKEFGGRDHSTVLHAYNKIKNMVAQDDNLRIEIETIKNKIR</sequence>
<protein>
    <recommendedName>
        <fullName evidence="1">Chromosomal replication initiator protein DnaA</fullName>
    </recommendedName>
</protein>
<feature type="chain" id="PRO_0000114268" description="Chromosomal replication initiator protein DnaA">
    <location>
        <begin position="1"/>
        <end position="453"/>
    </location>
</feature>
<feature type="region of interest" description="Domain I, interacts with DnaA modulators" evidence="1">
    <location>
        <begin position="1"/>
        <end position="78"/>
    </location>
</feature>
<feature type="region of interest" description="Domain II" evidence="1">
    <location>
        <begin position="78"/>
        <end position="112"/>
    </location>
</feature>
<feature type="region of interest" description="Domain III, AAA+ region" evidence="1">
    <location>
        <begin position="113"/>
        <end position="331"/>
    </location>
</feature>
<feature type="region of interest" description="Domain IV, binds dsDNA" evidence="1">
    <location>
        <begin position="332"/>
        <end position="453"/>
    </location>
</feature>
<feature type="binding site" evidence="1">
    <location>
        <position position="157"/>
    </location>
    <ligand>
        <name>ATP</name>
        <dbReference type="ChEBI" id="CHEBI:30616"/>
    </ligand>
</feature>
<feature type="binding site" evidence="1">
    <location>
        <position position="159"/>
    </location>
    <ligand>
        <name>ATP</name>
        <dbReference type="ChEBI" id="CHEBI:30616"/>
    </ligand>
</feature>
<feature type="binding site" evidence="1">
    <location>
        <position position="160"/>
    </location>
    <ligand>
        <name>ATP</name>
        <dbReference type="ChEBI" id="CHEBI:30616"/>
    </ligand>
</feature>
<feature type="binding site" evidence="1">
    <location>
        <position position="161"/>
    </location>
    <ligand>
        <name>ATP</name>
        <dbReference type="ChEBI" id="CHEBI:30616"/>
    </ligand>
</feature>
<gene>
    <name evidence="1" type="primary">dnaA</name>
    <name type="ordered locus">SAG0001</name>
</gene>